<keyword id="KW-0067">ATP-binding</keyword>
<keyword id="KW-0963">Cytoplasm</keyword>
<keyword id="KW-1015">Disulfide bond</keyword>
<keyword id="KW-0547">Nucleotide-binding</keyword>
<keyword id="KW-0694">RNA-binding</keyword>
<keyword id="KW-0808">Transferase</keyword>
<keyword id="KW-0819">tRNA processing</keyword>
<keyword id="KW-0820">tRNA-binding</keyword>
<reference key="1">
    <citation type="journal article" date="2006" name="PLoS Genet.">
        <title>Genome sequence of Rickettsia bellii illuminates the role of amoebae in gene exchanges between intracellular pathogens.</title>
        <authorList>
            <person name="Ogata H."/>
            <person name="La Scola B."/>
            <person name="Audic S."/>
            <person name="Renesto P."/>
            <person name="Blanc G."/>
            <person name="Robert C."/>
            <person name="Fournier P.-E."/>
            <person name="Claverie J.-M."/>
            <person name="Raoult D."/>
        </authorList>
    </citation>
    <scope>NUCLEOTIDE SEQUENCE [LARGE SCALE GENOMIC DNA]</scope>
    <source>
        <strain>RML369-C</strain>
    </source>
</reference>
<protein>
    <recommendedName>
        <fullName evidence="1">tRNA-specific 2-thiouridylase MnmA</fullName>
        <ecNumber evidence="1">2.8.1.13</ecNumber>
    </recommendedName>
</protein>
<comment type="function">
    <text evidence="1">Catalyzes the 2-thiolation of uridine at the wobble position (U34) of tRNA, leading to the formation of s(2)U34.</text>
</comment>
<comment type="catalytic activity">
    <reaction evidence="1">
        <text>S-sulfanyl-L-cysteinyl-[protein] + uridine(34) in tRNA + AH2 + ATP = 2-thiouridine(34) in tRNA + L-cysteinyl-[protein] + A + AMP + diphosphate + H(+)</text>
        <dbReference type="Rhea" id="RHEA:47032"/>
        <dbReference type="Rhea" id="RHEA-COMP:10131"/>
        <dbReference type="Rhea" id="RHEA-COMP:11726"/>
        <dbReference type="Rhea" id="RHEA-COMP:11727"/>
        <dbReference type="Rhea" id="RHEA-COMP:11728"/>
        <dbReference type="ChEBI" id="CHEBI:13193"/>
        <dbReference type="ChEBI" id="CHEBI:15378"/>
        <dbReference type="ChEBI" id="CHEBI:17499"/>
        <dbReference type="ChEBI" id="CHEBI:29950"/>
        <dbReference type="ChEBI" id="CHEBI:30616"/>
        <dbReference type="ChEBI" id="CHEBI:33019"/>
        <dbReference type="ChEBI" id="CHEBI:61963"/>
        <dbReference type="ChEBI" id="CHEBI:65315"/>
        <dbReference type="ChEBI" id="CHEBI:87170"/>
        <dbReference type="ChEBI" id="CHEBI:456215"/>
        <dbReference type="EC" id="2.8.1.13"/>
    </reaction>
</comment>
<comment type="subcellular location">
    <subcellularLocation>
        <location evidence="1">Cytoplasm</location>
    </subcellularLocation>
</comment>
<comment type="similarity">
    <text evidence="1">Belongs to the MnmA/TRMU family.</text>
</comment>
<organism>
    <name type="scientific">Rickettsia bellii (strain RML369-C)</name>
    <dbReference type="NCBI Taxonomy" id="336407"/>
    <lineage>
        <taxon>Bacteria</taxon>
        <taxon>Pseudomonadati</taxon>
        <taxon>Pseudomonadota</taxon>
        <taxon>Alphaproteobacteria</taxon>
        <taxon>Rickettsiales</taxon>
        <taxon>Rickettsiaceae</taxon>
        <taxon>Rickettsieae</taxon>
        <taxon>Rickettsia</taxon>
        <taxon>belli group</taxon>
    </lineage>
</organism>
<evidence type="ECO:0000255" key="1">
    <source>
        <dbReference type="HAMAP-Rule" id="MF_00144"/>
    </source>
</evidence>
<feature type="chain" id="PRO_0000278059" description="tRNA-specific 2-thiouridylase MnmA">
    <location>
        <begin position="1"/>
        <end position="367"/>
    </location>
</feature>
<feature type="region of interest" description="Interaction with tRNA" evidence="1">
    <location>
        <begin position="154"/>
        <end position="156"/>
    </location>
</feature>
<feature type="active site" description="Nucleophile" evidence="1">
    <location>
        <position position="108"/>
    </location>
</feature>
<feature type="active site" description="Cysteine persulfide intermediate" evidence="1">
    <location>
        <position position="204"/>
    </location>
</feature>
<feature type="binding site" evidence="1">
    <location>
        <begin position="14"/>
        <end position="21"/>
    </location>
    <ligand>
        <name>ATP</name>
        <dbReference type="ChEBI" id="CHEBI:30616"/>
    </ligand>
</feature>
<feature type="binding site" evidence="1">
    <location>
        <position position="40"/>
    </location>
    <ligand>
        <name>ATP</name>
        <dbReference type="ChEBI" id="CHEBI:30616"/>
    </ligand>
</feature>
<feature type="binding site" evidence="1">
    <location>
        <position position="132"/>
    </location>
    <ligand>
        <name>ATP</name>
        <dbReference type="ChEBI" id="CHEBI:30616"/>
    </ligand>
</feature>
<feature type="site" description="Interaction with tRNA" evidence="1">
    <location>
        <position position="133"/>
    </location>
</feature>
<feature type="site" description="Interaction with tRNA" evidence="1">
    <location>
        <position position="344"/>
    </location>
</feature>
<feature type="disulfide bond" description="Alternate" evidence="1">
    <location>
        <begin position="108"/>
        <end position="204"/>
    </location>
</feature>
<proteinExistence type="inferred from homology"/>
<accession>Q1RJ52</accession>
<name>MNMA_RICBR</name>
<sequence>MINSNDRQSTLVVAMSGGVDSSVVAGILCEQGYNVIGITLQLYDHGMATAKKNACCAGQDIYDAKMVANKLGMPHYVLDYESKFKESVIDNFVDSYLRGETPLPCVQCNKSVKFRDLIKTAKELGADKLVTGHYVRKINGDNGPELHMGLDPLKDQSYFLFATTKEQLEYLDFPLGALTKDETRKLASKFGLEVADKPDSQDICFVPDGNYKNVINKIRPNASESGKILHINGFELGTHSGIINYTIGQRRGLGISYHEPLYVIKIDPNSNIVYVGPESALNVQEFVIKDVNWLAGSLKDGEKLEVSVKVRSTRPPRLAEISKLEGDRMKVKFLSEEKAVAPGQACVIYDGTRVLGGGWITRDVIPA</sequence>
<gene>
    <name evidence="1" type="primary">mnmA</name>
    <name type="synonym">trmU</name>
    <name type="ordered locus">RBE_0531</name>
</gene>
<dbReference type="EC" id="2.8.1.13" evidence="1"/>
<dbReference type="EMBL" id="CP000087">
    <property type="protein sequence ID" value="ABE04612.1"/>
    <property type="molecule type" value="Genomic_DNA"/>
</dbReference>
<dbReference type="RefSeq" id="WP_011477203.1">
    <property type="nucleotide sequence ID" value="NC_007940.1"/>
</dbReference>
<dbReference type="SMR" id="Q1RJ52"/>
<dbReference type="KEGG" id="rbe:RBE_0531"/>
<dbReference type="eggNOG" id="COG0482">
    <property type="taxonomic scope" value="Bacteria"/>
</dbReference>
<dbReference type="HOGENOM" id="CLU_035188_0_1_5"/>
<dbReference type="OrthoDB" id="9800696at2"/>
<dbReference type="Proteomes" id="UP000001951">
    <property type="component" value="Chromosome"/>
</dbReference>
<dbReference type="GO" id="GO:0005737">
    <property type="term" value="C:cytoplasm"/>
    <property type="evidence" value="ECO:0007669"/>
    <property type="project" value="UniProtKB-SubCell"/>
</dbReference>
<dbReference type="GO" id="GO:0005524">
    <property type="term" value="F:ATP binding"/>
    <property type="evidence" value="ECO:0007669"/>
    <property type="project" value="UniProtKB-KW"/>
</dbReference>
<dbReference type="GO" id="GO:0000049">
    <property type="term" value="F:tRNA binding"/>
    <property type="evidence" value="ECO:0007669"/>
    <property type="project" value="UniProtKB-KW"/>
</dbReference>
<dbReference type="GO" id="GO:0103016">
    <property type="term" value="F:tRNA-uridine 2-sulfurtransferase activity"/>
    <property type="evidence" value="ECO:0007669"/>
    <property type="project" value="UniProtKB-EC"/>
</dbReference>
<dbReference type="GO" id="GO:0002143">
    <property type="term" value="P:tRNA wobble position uridine thiolation"/>
    <property type="evidence" value="ECO:0007669"/>
    <property type="project" value="TreeGrafter"/>
</dbReference>
<dbReference type="CDD" id="cd01998">
    <property type="entry name" value="MnmA_TRMU-like"/>
    <property type="match status" value="1"/>
</dbReference>
<dbReference type="FunFam" id="2.30.30.280:FF:000001">
    <property type="entry name" value="tRNA-specific 2-thiouridylase MnmA"/>
    <property type="match status" value="1"/>
</dbReference>
<dbReference type="FunFam" id="2.40.30.10:FF:000127">
    <property type="entry name" value="tRNA-specific 2-thiouridylase MnmA"/>
    <property type="match status" value="1"/>
</dbReference>
<dbReference type="FunFam" id="3.40.50.620:FF:000115">
    <property type="entry name" value="tRNA-specific 2-thiouridylase MnmA"/>
    <property type="match status" value="1"/>
</dbReference>
<dbReference type="Gene3D" id="2.30.30.280">
    <property type="entry name" value="Adenine nucleotide alpha hydrolases-like domains"/>
    <property type="match status" value="1"/>
</dbReference>
<dbReference type="Gene3D" id="3.40.50.620">
    <property type="entry name" value="HUPs"/>
    <property type="match status" value="1"/>
</dbReference>
<dbReference type="Gene3D" id="2.40.30.10">
    <property type="entry name" value="Translation factors"/>
    <property type="match status" value="1"/>
</dbReference>
<dbReference type="HAMAP" id="MF_00144">
    <property type="entry name" value="tRNA_thiouridyl_MnmA"/>
    <property type="match status" value="1"/>
</dbReference>
<dbReference type="InterPro" id="IPR004506">
    <property type="entry name" value="MnmA-like"/>
</dbReference>
<dbReference type="InterPro" id="IPR046885">
    <property type="entry name" value="MnmA-like_C"/>
</dbReference>
<dbReference type="InterPro" id="IPR046884">
    <property type="entry name" value="MnmA-like_central"/>
</dbReference>
<dbReference type="InterPro" id="IPR023382">
    <property type="entry name" value="MnmA-like_central_sf"/>
</dbReference>
<dbReference type="InterPro" id="IPR014729">
    <property type="entry name" value="Rossmann-like_a/b/a_fold"/>
</dbReference>
<dbReference type="NCBIfam" id="NF001138">
    <property type="entry name" value="PRK00143.1"/>
    <property type="match status" value="1"/>
</dbReference>
<dbReference type="NCBIfam" id="TIGR00420">
    <property type="entry name" value="trmU"/>
    <property type="match status" value="1"/>
</dbReference>
<dbReference type="PANTHER" id="PTHR11933:SF5">
    <property type="entry name" value="MITOCHONDRIAL TRNA-SPECIFIC 2-THIOURIDYLASE 1"/>
    <property type="match status" value="1"/>
</dbReference>
<dbReference type="PANTHER" id="PTHR11933">
    <property type="entry name" value="TRNA 5-METHYLAMINOMETHYL-2-THIOURIDYLATE -METHYLTRANSFERASE"/>
    <property type="match status" value="1"/>
</dbReference>
<dbReference type="Pfam" id="PF03054">
    <property type="entry name" value="tRNA_Me_trans"/>
    <property type="match status" value="1"/>
</dbReference>
<dbReference type="Pfam" id="PF20258">
    <property type="entry name" value="tRNA_Me_trans_C"/>
    <property type="match status" value="1"/>
</dbReference>
<dbReference type="Pfam" id="PF20259">
    <property type="entry name" value="tRNA_Me_trans_M"/>
    <property type="match status" value="1"/>
</dbReference>
<dbReference type="SUPFAM" id="SSF52402">
    <property type="entry name" value="Adenine nucleotide alpha hydrolases-like"/>
    <property type="match status" value="1"/>
</dbReference>